<accession>Q0SN11</accession>
<accession>G0ISD9</accession>
<name>RL30_BORAP</name>
<protein>
    <recommendedName>
        <fullName evidence="1">Large ribosomal subunit protein uL30</fullName>
    </recommendedName>
    <alternativeName>
        <fullName evidence="2">50S ribosomal protein L30</fullName>
    </alternativeName>
</protein>
<evidence type="ECO:0000255" key="1">
    <source>
        <dbReference type="HAMAP-Rule" id="MF_01371"/>
    </source>
</evidence>
<evidence type="ECO:0000305" key="2"/>
<reference key="1">
    <citation type="journal article" date="2006" name="BMC Genomics">
        <title>Comparative genome analysis: selection pressure on the Borrelia vls cassettes is essential for infectivity.</title>
        <authorList>
            <person name="Gloeckner G."/>
            <person name="Schulte-Spechtel U."/>
            <person name="Schilhabel M."/>
            <person name="Felder M."/>
            <person name="Suehnel J."/>
            <person name="Wilske B."/>
            <person name="Platzer M."/>
        </authorList>
    </citation>
    <scope>NUCLEOTIDE SEQUENCE [LARGE SCALE GENOMIC DNA]</scope>
    <source>
        <strain>PKo</strain>
    </source>
</reference>
<reference key="2">
    <citation type="journal article" date="2011" name="J. Bacteriol.">
        <title>Whole-genome sequences of two Borrelia afzelii and two Borrelia garinii Lyme disease agent isolates.</title>
        <authorList>
            <person name="Casjens S.R."/>
            <person name="Mongodin E.F."/>
            <person name="Qiu W.G."/>
            <person name="Dunn J.J."/>
            <person name="Luft B.J."/>
            <person name="Fraser-Liggett C.M."/>
            <person name="Schutzer S.E."/>
        </authorList>
    </citation>
    <scope>NUCLEOTIDE SEQUENCE [LARGE SCALE GENOMIC DNA]</scope>
    <source>
        <strain>PKo</strain>
    </source>
</reference>
<proteinExistence type="inferred from homology"/>
<sequence>MEKNREIISKNNINVEVFLIRSLIGKLNKKVKVLKALGLNKIGDKKVHFLNQSIKGMLNETINMILLSEVSNV</sequence>
<feature type="chain" id="PRO_0000273753" description="Large ribosomal subunit protein uL30">
    <location>
        <begin position="1"/>
        <end position="73"/>
    </location>
</feature>
<keyword id="KW-0687">Ribonucleoprotein</keyword>
<keyword id="KW-0689">Ribosomal protein</keyword>
<gene>
    <name evidence="1" type="primary">rpmD</name>
    <name type="ordered locus">BAPKO_0524</name>
    <name type="ordered locus">BafPKo_0512</name>
</gene>
<dbReference type="EMBL" id="CP000395">
    <property type="protein sequence ID" value="ABH01767.1"/>
    <property type="status" value="ALT_INIT"/>
    <property type="molecule type" value="Genomic_DNA"/>
</dbReference>
<dbReference type="EMBL" id="CP002933">
    <property type="protein sequence ID" value="AEL69720.1"/>
    <property type="molecule type" value="Genomic_DNA"/>
</dbReference>
<dbReference type="SMR" id="Q0SN11"/>
<dbReference type="STRING" id="29518.BLA32_01780"/>
<dbReference type="KEGG" id="baf:BAPKO_0524"/>
<dbReference type="KEGG" id="bafz:BafPKo_0512"/>
<dbReference type="PATRIC" id="fig|390236.22.peg.493"/>
<dbReference type="eggNOG" id="COG1841">
    <property type="taxonomic scope" value="Bacteria"/>
</dbReference>
<dbReference type="HOGENOM" id="CLU_177546_0_0_12"/>
<dbReference type="Proteomes" id="UP000005216">
    <property type="component" value="Chromosome"/>
</dbReference>
<dbReference type="GO" id="GO:0015934">
    <property type="term" value="C:large ribosomal subunit"/>
    <property type="evidence" value="ECO:0007669"/>
    <property type="project" value="InterPro"/>
</dbReference>
<dbReference type="GO" id="GO:0003735">
    <property type="term" value="F:structural constituent of ribosome"/>
    <property type="evidence" value="ECO:0007669"/>
    <property type="project" value="InterPro"/>
</dbReference>
<dbReference type="GO" id="GO:0006412">
    <property type="term" value="P:translation"/>
    <property type="evidence" value="ECO:0007669"/>
    <property type="project" value="UniProtKB-UniRule"/>
</dbReference>
<dbReference type="CDD" id="cd00355">
    <property type="entry name" value="Ribosomal_L30_like"/>
    <property type="match status" value="1"/>
</dbReference>
<dbReference type="Gene3D" id="3.30.1390.20">
    <property type="entry name" value="Ribosomal protein L30, ferredoxin-like fold domain"/>
    <property type="match status" value="1"/>
</dbReference>
<dbReference type="HAMAP" id="MF_01371_B">
    <property type="entry name" value="Ribosomal_uL30_B"/>
    <property type="match status" value="1"/>
</dbReference>
<dbReference type="InterPro" id="IPR036919">
    <property type="entry name" value="Ribo_uL30_ferredoxin-like_sf"/>
</dbReference>
<dbReference type="InterPro" id="IPR005996">
    <property type="entry name" value="Ribosomal_uL30_bac-type"/>
</dbReference>
<dbReference type="InterPro" id="IPR016082">
    <property type="entry name" value="Ribosomal_uL30_ferredoxin-like"/>
</dbReference>
<dbReference type="NCBIfam" id="TIGR01308">
    <property type="entry name" value="rpmD_bact"/>
    <property type="match status" value="1"/>
</dbReference>
<dbReference type="Pfam" id="PF00327">
    <property type="entry name" value="Ribosomal_L30"/>
    <property type="match status" value="1"/>
</dbReference>
<dbReference type="SUPFAM" id="SSF55129">
    <property type="entry name" value="Ribosomal protein L30p/L7e"/>
    <property type="match status" value="1"/>
</dbReference>
<comment type="subunit">
    <text evidence="1">Part of the 50S ribosomal subunit.</text>
</comment>
<comment type="similarity">
    <text evidence="1">Belongs to the universal ribosomal protein uL30 family.</text>
</comment>
<comment type="sequence caution" evidence="2">
    <conflict type="erroneous initiation">
        <sequence resource="EMBL-CDS" id="ABH01767"/>
    </conflict>
</comment>
<organism>
    <name type="scientific">Borreliella afzelii (strain PKo)</name>
    <name type="common">Borrelia afzelii</name>
    <dbReference type="NCBI Taxonomy" id="390236"/>
    <lineage>
        <taxon>Bacteria</taxon>
        <taxon>Pseudomonadati</taxon>
        <taxon>Spirochaetota</taxon>
        <taxon>Spirochaetia</taxon>
        <taxon>Spirochaetales</taxon>
        <taxon>Borreliaceae</taxon>
        <taxon>Borreliella</taxon>
    </lineage>
</organism>